<proteinExistence type="inferred from homology"/>
<organism>
    <name type="scientific">Geotalea uraniireducens (strain Rf4)</name>
    <name type="common">Geobacter uraniireducens</name>
    <dbReference type="NCBI Taxonomy" id="351605"/>
    <lineage>
        <taxon>Bacteria</taxon>
        <taxon>Pseudomonadati</taxon>
        <taxon>Thermodesulfobacteriota</taxon>
        <taxon>Desulfuromonadia</taxon>
        <taxon>Geobacterales</taxon>
        <taxon>Geobacteraceae</taxon>
        <taxon>Geotalea</taxon>
    </lineage>
</organism>
<accession>A5GAU5</accession>
<feature type="chain" id="PRO_1000085975" description="Small ribosomal subunit protein uS4">
    <location>
        <begin position="1"/>
        <end position="208"/>
    </location>
</feature>
<feature type="domain" description="S4 RNA-binding" evidence="1">
    <location>
        <begin position="98"/>
        <end position="158"/>
    </location>
</feature>
<evidence type="ECO:0000255" key="1">
    <source>
        <dbReference type="HAMAP-Rule" id="MF_01306"/>
    </source>
</evidence>
<evidence type="ECO:0000305" key="2"/>
<sequence length="208" mass="24057">MARYTGPSCRLCRRENTELFLKGERCYTDKCAIKRRNYPPGQHGQGRTKTSDYGVQLREKQKVRRIYGILENQFRGYFERADRLKGVTGENLLFLLERRLDNIAYRLGFASSRIEARQLVRHGHFTLNGRKVTIPSIQVKAGDVLELREKSRKVACINESLEAVVRRGIPQWLELDKGAYKGAVKTLPAREDITMPIQEQLIVELYSK</sequence>
<protein>
    <recommendedName>
        <fullName evidence="1">Small ribosomal subunit protein uS4</fullName>
    </recommendedName>
    <alternativeName>
        <fullName evidence="2">30S ribosomal protein S4</fullName>
    </alternativeName>
</protein>
<dbReference type="EMBL" id="CP000698">
    <property type="protein sequence ID" value="ABQ25297.1"/>
    <property type="molecule type" value="Genomic_DNA"/>
</dbReference>
<dbReference type="RefSeq" id="WP_011938019.1">
    <property type="nucleotide sequence ID" value="NC_009483.1"/>
</dbReference>
<dbReference type="SMR" id="A5GAU5"/>
<dbReference type="STRING" id="351605.Gura_1091"/>
<dbReference type="KEGG" id="gur:Gura_1091"/>
<dbReference type="HOGENOM" id="CLU_092403_0_2_7"/>
<dbReference type="OrthoDB" id="9803672at2"/>
<dbReference type="Proteomes" id="UP000006695">
    <property type="component" value="Chromosome"/>
</dbReference>
<dbReference type="GO" id="GO:0015935">
    <property type="term" value="C:small ribosomal subunit"/>
    <property type="evidence" value="ECO:0007669"/>
    <property type="project" value="InterPro"/>
</dbReference>
<dbReference type="GO" id="GO:0019843">
    <property type="term" value="F:rRNA binding"/>
    <property type="evidence" value="ECO:0007669"/>
    <property type="project" value="UniProtKB-UniRule"/>
</dbReference>
<dbReference type="GO" id="GO:0003735">
    <property type="term" value="F:structural constituent of ribosome"/>
    <property type="evidence" value="ECO:0007669"/>
    <property type="project" value="InterPro"/>
</dbReference>
<dbReference type="GO" id="GO:0042274">
    <property type="term" value="P:ribosomal small subunit biogenesis"/>
    <property type="evidence" value="ECO:0007669"/>
    <property type="project" value="TreeGrafter"/>
</dbReference>
<dbReference type="GO" id="GO:0006412">
    <property type="term" value="P:translation"/>
    <property type="evidence" value="ECO:0007669"/>
    <property type="project" value="UniProtKB-UniRule"/>
</dbReference>
<dbReference type="CDD" id="cd00165">
    <property type="entry name" value="S4"/>
    <property type="match status" value="1"/>
</dbReference>
<dbReference type="FunFam" id="1.10.1050.10:FF:000001">
    <property type="entry name" value="30S ribosomal protein S4"/>
    <property type="match status" value="1"/>
</dbReference>
<dbReference type="FunFam" id="3.10.290.10:FF:000001">
    <property type="entry name" value="30S ribosomal protein S4"/>
    <property type="match status" value="1"/>
</dbReference>
<dbReference type="Gene3D" id="1.10.1050.10">
    <property type="entry name" value="Ribosomal Protein S4 Delta 41, Chain A, domain 1"/>
    <property type="match status" value="1"/>
</dbReference>
<dbReference type="Gene3D" id="3.10.290.10">
    <property type="entry name" value="RNA-binding S4 domain"/>
    <property type="match status" value="1"/>
</dbReference>
<dbReference type="HAMAP" id="MF_01306_B">
    <property type="entry name" value="Ribosomal_uS4_B"/>
    <property type="match status" value="1"/>
</dbReference>
<dbReference type="InterPro" id="IPR022801">
    <property type="entry name" value="Ribosomal_uS4"/>
</dbReference>
<dbReference type="InterPro" id="IPR005709">
    <property type="entry name" value="Ribosomal_uS4_bac-type"/>
</dbReference>
<dbReference type="InterPro" id="IPR001912">
    <property type="entry name" value="Ribosomal_uS4_N"/>
</dbReference>
<dbReference type="InterPro" id="IPR002942">
    <property type="entry name" value="S4_RNA-bd"/>
</dbReference>
<dbReference type="InterPro" id="IPR036986">
    <property type="entry name" value="S4_RNA-bd_sf"/>
</dbReference>
<dbReference type="NCBIfam" id="NF003717">
    <property type="entry name" value="PRK05327.1"/>
    <property type="match status" value="1"/>
</dbReference>
<dbReference type="NCBIfam" id="TIGR01017">
    <property type="entry name" value="rpsD_bact"/>
    <property type="match status" value="1"/>
</dbReference>
<dbReference type="PANTHER" id="PTHR11831">
    <property type="entry name" value="30S 40S RIBOSOMAL PROTEIN"/>
    <property type="match status" value="1"/>
</dbReference>
<dbReference type="PANTHER" id="PTHR11831:SF4">
    <property type="entry name" value="SMALL RIBOSOMAL SUBUNIT PROTEIN US4M"/>
    <property type="match status" value="1"/>
</dbReference>
<dbReference type="Pfam" id="PF00163">
    <property type="entry name" value="Ribosomal_S4"/>
    <property type="match status" value="1"/>
</dbReference>
<dbReference type="Pfam" id="PF01479">
    <property type="entry name" value="S4"/>
    <property type="match status" value="1"/>
</dbReference>
<dbReference type="SMART" id="SM01390">
    <property type="entry name" value="Ribosomal_S4"/>
    <property type="match status" value="1"/>
</dbReference>
<dbReference type="SMART" id="SM00363">
    <property type="entry name" value="S4"/>
    <property type="match status" value="1"/>
</dbReference>
<dbReference type="SUPFAM" id="SSF55174">
    <property type="entry name" value="Alpha-L RNA-binding motif"/>
    <property type="match status" value="1"/>
</dbReference>
<dbReference type="PROSITE" id="PS50889">
    <property type="entry name" value="S4"/>
    <property type="match status" value="1"/>
</dbReference>
<keyword id="KW-1185">Reference proteome</keyword>
<keyword id="KW-0687">Ribonucleoprotein</keyword>
<keyword id="KW-0689">Ribosomal protein</keyword>
<keyword id="KW-0694">RNA-binding</keyword>
<keyword id="KW-0699">rRNA-binding</keyword>
<name>RS4_GEOUR</name>
<gene>
    <name evidence="1" type="primary">rpsD</name>
    <name type="ordered locus">Gura_1091</name>
</gene>
<comment type="function">
    <text evidence="1">One of the primary rRNA binding proteins, it binds directly to 16S rRNA where it nucleates assembly of the body of the 30S subunit.</text>
</comment>
<comment type="function">
    <text evidence="1">With S5 and S12 plays an important role in translational accuracy.</text>
</comment>
<comment type="subunit">
    <text evidence="1">Part of the 30S ribosomal subunit. Contacts protein S5. The interaction surface between S4 and S5 is involved in control of translational fidelity.</text>
</comment>
<comment type="similarity">
    <text evidence="1">Belongs to the universal ribosomal protein uS4 family.</text>
</comment>
<reference key="1">
    <citation type="submission" date="2007-05" db="EMBL/GenBank/DDBJ databases">
        <title>Complete sequence of Geobacter uraniireducens Rf4.</title>
        <authorList>
            <consortium name="US DOE Joint Genome Institute"/>
            <person name="Copeland A."/>
            <person name="Lucas S."/>
            <person name="Lapidus A."/>
            <person name="Barry K."/>
            <person name="Detter J.C."/>
            <person name="Glavina del Rio T."/>
            <person name="Hammon N."/>
            <person name="Israni S."/>
            <person name="Dalin E."/>
            <person name="Tice H."/>
            <person name="Pitluck S."/>
            <person name="Chertkov O."/>
            <person name="Brettin T."/>
            <person name="Bruce D."/>
            <person name="Han C."/>
            <person name="Schmutz J."/>
            <person name="Larimer F."/>
            <person name="Land M."/>
            <person name="Hauser L."/>
            <person name="Kyrpides N."/>
            <person name="Mikhailova N."/>
            <person name="Shelobolina E."/>
            <person name="Aklujkar M."/>
            <person name="Lovley D."/>
            <person name="Richardson P."/>
        </authorList>
    </citation>
    <scope>NUCLEOTIDE SEQUENCE [LARGE SCALE GENOMIC DNA]</scope>
    <source>
        <strain>ATCC BAA-1134 / JCM 13001 / Rf4</strain>
    </source>
</reference>